<feature type="chain" id="PRO_0000384359" description="Mitochondrial distribution and morphology protein 34">
    <location>
        <begin position="1"/>
        <end position="523"/>
    </location>
</feature>
<feature type="domain" description="SMP-LTD" evidence="1">
    <location>
        <begin position="1"/>
        <end position="200"/>
    </location>
</feature>
<feature type="region of interest" description="Disordered" evidence="2">
    <location>
        <begin position="489"/>
        <end position="523"/>
    </location>
</feature>
<gene>
    <name evidence="1" type="primary">MDM34</name>
    <name type="ORF">PICST_28329</name>
</gene>
<organism>
    <name type="scientific">Scheffersomyces stipitis (strain ATCC 58785 / CBS 6054 / NBRC 10063 / NRRL Y-11545)</name>
    <name type="common">Yeast</name>
    <name type="synonym">Pichia stipitis</name>
    <dbReference type="NCBI Taxonomy" id="322104"/>
    <lineage>
        <taxon>Eukaryota</taxon>
        <taxon>Fungi</taxon>
        <taxon>Dikarya</taxon>
        <taxon>Ascomycota</taxon>
        <taxon>Saccharomycotina</taxon>
        <taxon>Pichiomycetes</taxon>
        <taxon>Debaryomycetaceae</taxon>
        <taxon>Scheffersomyces</taxon>
    </lineage>
</organism>
<reference key="1">
    <citation type="journal article" date="2007" name="Nat. Biotechnol.">
        <title>Genome sequence of the lignocellulose-bioconverting and xylose-fermenting yeast Pichia stipitis.</title>
        <authorList>
            <person name="Jeffries T.W."/>
            <person name="Grigoriev I.V."/>
            <person name="Grimwood J."/>
            <person name="Laplaza J.M."/>
            <person name="Aerts A."/>
            <person name="Salamov A."/>
            <person name="Schmutz J."/>
            <person name="Lindquist E."/>
            <person name="Dehal P."/>
            <person name="Shapiro H."/>
            <person name="Jin Y.-S."/>
            <person name="Passoth V."/>
            <person name="Richardson P.M."/>
        </authorList>
    </citation>
    <scope>NUCLEOTIDE SEQUENCE [LARGE SCALE GENOMIC DNA]</scope>
    <source>
        <strain>ATCC 58785 / CBS 6054 / NBRC 10063 / NRRL Y-11545</strain>
    </source>
</reference>
<dbReference type="EMBL" id="AAVQ01000001">
    <property type="protein sequence ID" value="EAZ63393.2"/>
    <property type="molecule type" value="Genomic_DNA"/>
</dbReference>
<dbReference type="RefSeq" id="XP_001387416.2">
    <property type="nucleotide sequence ID" value="XM_001387379.1"/>
</dbReference>
<dbReference type="FunCoup" id="A3GFQ7">
    <property type="interactions" value="67"/>
</dbReference>
<dbReference type="STRING" id="322104.A3GFQ7"/>
<dbReference type="GeneID" id="4851106"/>
<dbReference type="KEGG" id="pic:PICST_28329"/>
<dbReference type="eggNOG" id="ENOG502QT3W">
    <property type="taxonomic scope" value="Eukaryota"/>
</dbReference>
<dbReference type="HOGENOM" id="CLU_476594_0_0_1"/>
<dbReference type="InParanoid" id="A3GFQ7"/>
<dbReference type="OMA" id="PGCLERQ"/>
<dbReference type="OrthoDB" id="17927at2759"/>
<dbReference type="Proteomes" id="UP000002258">
    <property type="component" value="Chromosome 1"/>
</dbReference>
<dbReference type="GO" id="GO:0032865">
    <property type="term" value="C:ERMES complex"/>
    <property type="evidence" value="ECO:0007669"/>
    <property type="project" value="UniProtKB-UniRule"/>
</dbReference>
<dbReference type="GO" id="GO:0008289">
    <property type="term" value="F:lipid binding"/>
    <property type="evidence" value="ECO:0007669"/>
    <property type="project" value="UniProtKB-KW"/>
</dbReference>
<dbReference type="GO" id="GO:0000002">
    <property type="term" value="P:mitochondrial genome maintenance"/>
    <property type="evidence" value="ECO:0007669"/>
    <property type="project" value="UniProtKB-UniRule"/>
</dbReference>
<dbReference type="GO" id="GO:1990456">
    <property type="term" value="P:mitochondrion-endoplasmic reticulum membrane tethering"/>
    <property type="evidence" value="ECO:0007669"/>
    <property type="project" value="TreeGrafter"/>
</dbReference>
<dbReference type="GO" id="GO:0015914">
    <property type="term" value="P:phospholipid transport"/>
    <property type="evidence" value="ECO:0007669"/>
    <property type="project" value="TreeGrafter"/>
</dbReference>
<dbReference type="CDD" id="cd21673">
    <property type="entry name" value="SMP_Mdm34"/>
    <property type="match status" value="1"/>
</dbReference>
<dbReference type="HAMAP" id="MF_03105">
    <property type="entry name" value="Mdm34"/>
    <property type="match status" value="1"/>
</dbReference>
<dbReference type="InterPro" id="IPR027536">
    <property type="entry name" value="Mdm34"/>
</dbReference>
<dbReference type="InterPro" id="IPR031468">
    <property type="entry name" value="SMP_LBD"/>
</dbReference>
<dbReference type="PANTHER" id="PTHR28185">
    <property type="entry name" value="MITOCHONDRIAL DISTRIBUTION AND MORPHOLOGY PROTEIN 34"/>
    <property type="match status" value="1"/>
</dbReference>
<dbReference type="PANTHER" id="PTHR28185:SF1">
    <property type="entry name" value="MITOCHONDRIAL DISTRIBUTION AND MORPHOLOGY PROTEIN 34"/>
    <property type="match status" value="1"/>
</dbReference>
<dbReference type="PROSITE" id="PS51847">
    <property type="entry name" value="SMP"/>
    <property type="match status" value="1"/>
</dbReference>
<evidence type="ECO:0000255" key="1">
    <source>
        <dbReference type="HAMAP-Rule" id="MF_03105"/>
    </source>
</evidence>
<evidence type="ECO:0000256" key="2">
    <source>
        <dbReference type="SAM" id="MobiDB-lite"/>
    </source>
</evidence>
<name>MDM34_PICST</name>
<accession>A3GFQ7</accession>
<sequence length="523" mass="59731">MSFKVNWKSLETDSLTSWTKDLLTSALNSGKSPNILASSISIKDLNFGKIAPNFEILEIGELGRDRFRGIFKINYEGDFHLTLHTNVQANPLNIYYSNSMEKEIDSQFVTPNFLLSNEQFALPLDLKLSDIKISGIGIIVFSKSKGLTLVFRNDPLDSIKVSSTFDTVQVLANFLQKQIETQIRDLFRETLPTLIHQFSLKYLSLDNNSDDLHAHFASSSRTHSSALDPDNEFNNFTYSSKNLQKNLQLFNTRETLDLHIPKFKGIIQRSHLEKFTQNYPSLLNSLYLNLHEIDMKSYNTYNNNTGSNGIPIDLLINDKNFNRTNRVLKEISDIQSNSFYKQSNNNKDTTVKPKRRRIKYSTRKKAASPTSTLINDDFHMASLHSSVASSMPMSMSSSLSDSEERPQLLAQPRPMRISPDFYQAFLKSTPEQCWYQCKRVGLGTNYFNFATSQPISTSPIKKDPARDFIKEKKSINYIDINKVNNKLKELSMDRSGKRKQRNYGSATYESENPIVAPPPPYSH</sequence>
<keyword id="KW-0445">Lipid transport</keyword>
<keyword id="KW-0446">Lipid-binding</keyword>
<keyword id="KW-0472">Membrane</keyword>
<keyword id="KW-0496">Mitochondrion</keyword>
<keyword id="KW-1000">Mitochondrion outer membrane</keyword>
<keyword id="KW-1185">Reference proteome</keyword>
<keyword id="KW-0812">Transmembrane</keyword>
<keyword id="KW-1134">Transmembrane beta strand</keyword>
<keyword id="KW-0813">Transport</keyword>
<protein>
    <recommendedName>
        <fullName evidence="1">Mitochondrial distribution and morphology protein 34</fullName>
    </recommendedName>
</protein>
<proteinExistence type="inferred from homology"/>
<comment type="function">
    <text evidence="1">Component of the ERMES/MDM complex, which serves as a molecular tether to connect the endoplasmic reticulum (ER) and mitochondria. Components of this complex are involved in the control of mitochondrial shape and protein biogenesis, and function in nonvesicular lipid trafficking between the ER and mitochondria. MDM34 is required for the interaction of the ER-resident membrane protein MMM1 and the outer mitochondrial membrane-resident beta-barrel protein MDM10.</text>
</comment>
<comment type="subunit">
    <text evidence="1">Component of the ER-mitochondria encounter structure (ERMES) or MDM complex, composed of MMM1, MDM10, MDM12 and MDM34.</text>
</comment>
<comment type="subcellular location">
    <subcellularLocation>
        <location evidence="1">Mitochondrion outer membrane</location>
        <topology evidence="1">Multi-pass membrane protein</topology>
    </subcellularLocation>
    <text evidence="1">The ERMES/MDM complex localizes to a few discrete foci (around 10 per single cell), that represent mitochondria-endoplasmic reticulum junctions. These foci are often found next to mtDNA nucleoids.</text>
</comment>
<comment type="domain">
    <text evidence="1">Lacks alpha-helical transmembrane segments, suggesting that it resides in the membrane via beta-sheet conformations similar to those predicted for other outer membrane proteins and porin.</text>
</comment>
<comment type="domain">
    <text evidence="1">The SMP-LTD domain is a barrel-like domain that can bind various types of glycerophospholipids in its interior and mediate their transfer between two adjacent bilayers.</text>
</comment>
<comment type="similarity">
    <text evidence="1">Belongs to the MDM34 family.</text>
</comment>